<accession>Q3KQV3</accession>
<accession>B4E333</accession>
<accession>Q495L1</accession>
<accession>Q495L3</accession>
<accession>Q8N932</accession>
<evidence type="ECO:0000255" key="1">
    <source>
        <dbReference type="PROSITE-ProRule" id="PRU00042"/>
    </source>
</evidence>
<evidence type="ECO:0000255" key="2">
    <source>
        <dbReference type="PROSITE-ProRule" id="PRU00119"/>
    </source>
</evidence>
<evidence type="ECO:0000269" key="3">
    <source>
    </source>
</evidence>
<evidence type="ECO:0000305" key="4"/>
<evidence type="ECO:0007744" key="5">
    <source>
    </source>
</evidence>
<keyword id="KW-0238">DNA-binding</keyword>
<keyword id="KW-0479">Metal-binding</keyword>
<keyword id="KW-0539">Nucleus</keyword>
<keyword id="KW-0597">Phosphoprotein</keyword>
<keyword id="KW-1267">Proteomics identification</keyword>
<keyword id="KW-1185">Reference proteome</keyword>
<keyword id="KW-0677">Repeat</keyword>
<keyword id="KW-0804">Transcription</keyword>
<keyword id="KW-0805">Transcription regulation</keyword>
<keyword id="KW-0862">Zinc</keyword>
<keyword id="KW-0863">Zinc-finger</keyword>
<name>ZN792_HUMAN</name>
<dbReference type="EMBL" id="AK304550">
    <property type="protein sequence ID" value="BAG65345.1"/>
    <property type="molecule type" value="mRNA"/>
</dbReference>
<dbReference type="EMBL" id="AC008555">
    <property type="status" value="NOT_ANNOTATED_CDS"/>
    <property type="molecule type" value="Genomic_DNA"/>
</dbReference>
<dbReference type="EMBL" id="BC101118">
    <property type="protein sequence ID" value="AAI01119.1"/>
    <property type="status" value="ALT_INIT"/>
    <property type="molecule type" value="mRNA"/>
</dbReference>
<dbReference type="EMBL" id="BC101119">
    <property type="protein sequence ID" value="AAI01120.1"/>
    <property type="status" value="ALT_INIT"/>
    <property type="molecule type" value="mRNA"/>
</dbReference>
<dbReference type="EMBL" id="BC101120">
    <property type="protein sequence ID" value="AAI01121.1"/>
    <property type="status" value="ALT_INIT"/>
    <property type="molecule type" value="mRNA"/>
</dbReference>
<dbReference type="CCDS" id="CCDS12440.2"/>
<dbReference type="RefSeq" id="NP_787068.3">
    <property type="nucleotide sequence ID" value="NM_175872.4"/>
</dbReference>
<dbReference type="SMR" id="Q3KQV3"/>
<dbReference type="BioGRID" id="125986">
    <property type="interactions" value="73"/>
</dbReference>
<dbReference type="FunCoup" id="Q3KQV3">
    <property type="interactions" value="6"/>
</dbReference>
<dbReference type="IntAct" id="Q3KQV3">
    <property type="interactions" value="50"/>
</dbReference>
<dbReference type="STRING" id="9606.ENSP00000385099"/>
<dbReference type="GlyGen" id="Q3KQV3">
    <property type="glycosylation" value="1 site, 1 N-linked glycan (1 site)"/>
</dbReference>
<dbReference type="iPTMnet" id="Q3KQV3"/>
<dbReference type="PhosphoSitePlus" id="Q3KQV3"/>
<dbReference type="BioMuta" id="ZNF792"/>
<dbReference type="DMDM" id="215273919"/>
<dbReference type="jPOST" id="Q3KQV3"/>
<dbReference type="MassIVE" id="Q3KQV3"/>
<dbReference type="PaxDb" id="9606-ENSP00000385099"/>
<dbReference type="PeptideAtlas" id="Q3KQV3"/>
<dbReference type="ProteomicsDB" id="61727"/>
<dbReference type="Antibodypedia" id="29225">
    <property type="antibodies" value="28 antibodies from 10 providers"/>
</dbReference>
<dbReference type="DNASU" id="126375"/>
<dbReference type="Ensembl" id="ENST00000404801.2">
    <property type="protein sequence ID" value="ENSP00000385099.1"/>
    <property type="gene ID" value="ENSG00000180884.10"/>
</dbReference>
<dbReference type="GeneID" id="126375"/>
<dbReference type="KEGG" id="hsa:126375"/>
<dbReference type="MANE-Select" id="ENST00000404801.2">
    <property type="protein sequence ID" value="ENSP00000385099.1"/>
    <property type="RefSeq nucleotide sequence ID" value="NM_175872.5"/>
    <property type="RefSeq protein sequence ID" value="NP_787068.3"/>
</dbReference>
<dbReference type="UCSC" id="uc002nxh.1">
    <property type="organism name" value="human"/>
</dbReference>
<dbReference type="AGR" id="HGNC:24751"/>
<dbReference type="CTD" id="126375"/>
<dbReference type="GeneCards" id="ZNF792"/>
<dbReference type="HGNC" id="HGNC:24751">
    <property type="gene designation" value="ZNF792"/>
</dbReference>
<dbReference type="HPA" id="ENSG00000180884">
    <property type="expression patterns" value="Low tissue specificity"/>
</dbReference>
<dbReference type="neXtProt" id="NX_Q3KQV3"/>
<dbReference type="OpenTargets" id="ENSG00000180884"/>
<dbReference type="PharmGKB" id="PA162410535"/>
<dbReference type="VEuPathDB" id="HostDB:ENSG00000180884"/>
<dbReference type="eggNOG" id="KOG1721">
    <property type="taxonomic scope" value="Eukaryota"/>
</dbReference>
<dbReference type="GeneTree" id="ENSGT00940000162928"/>
<dbReference type="HOGENOM" id="CLU_002678_44_5_1"/>
<dbReference type="InParanoid" id="Q3KQV3"/>
<dbReference type="OMA" id="NIHNPIR"/>
<dbReference type="OrthoDB" id="6077919at2759"/>
<dbReference type="PAN-GO" id="Q3KQV3">
    <property type="GO annotations" value="4 GO annotations based on evolutionary models"/>
</dbReference>
<dbReference type="PhylomeDB" id="Q3KQV3"/>
<dbReference type="TreeFam" id="TF342033"/>
<dbReference type="PathwayCommons" id="Q3KQV3"/>
<dbReference type="Reactome" id="R-HSA-212436">
    <property type="pathway name" value="Generic Transcription Pathway"/>
</dbReference>
<dbReference type="SignaLink" id="Q3KQV3"/>
<dbReference type="BioGRID-ORCS" id="126375">
    <property type="hits" value="13 hits in 1177 CRISPR screens"/>
</dbReference>
<dbReference type="GenomeRNAi" id="126375"/>
<dbReference type="Pharos" id="Q3KQV3">
    <property type="development level" value="Tdark"/>
</dbReference>
<dbReference type="PRO" id="PR:Q3KQV3"/>
<dbReference type="Proteomes" id="UP000005640">
    <property type="component" value="Chromosome 19"/>
</dbReference>
<dbReference type="RNAct" id="Q3KQV3">
    <property type="molecule type" value="protein"/>
</dbReference>
<dbReference type="Bgee" id="ENSG00000180884">
    <property type="expression patterns" value="Expressed in male germ line stem cell (sensu Vertebrata) in testis and 118 other cell types or tissues"/>
</dbReference>
<dbReference type="ExpressionAtlas" id="Q3KQV3">
    <property type="expression patterns" value="baseline and differential"/>
</dbReference>
<dbReference type="GO" id="GO:0005634">
    <property type="term" value="C:nucleus"/>
    <property type="evidence" value="ECO:0000318"/>
    <property type="project" value="GO_Central"/>
</dbReference>
<dbReference type="GO" id="GO:0000981">
    <property type="term" value="F:DNA-binding transcription factor activity, RNA polymerase II-specific"/>
    <property type="evidence" value="ECO:0000318"/>
    <property type="project" value="GO_Central"/>
</dbReference>
<dbReference type="GO" id="GO:0042802">
    <property type="term" value="F:identical protein binding"/>
    <property type="evidence" value="ECO:0000353"/>
    <property type="project" value="IntAct"/>
</dbReference>
<dbReference type="GO" id="GO:0000978">
    <property type="term" value="F:RNA polymerase II cis-regulatory region sequence-specific DNA binding"/>
    <property type="evidence" value="ECO:0000318"/>
    <property type="project" value="GO_Central"/>
</dbReference>
<dbReference type="GO" id="GO:0008270">
    <property type="term" value="F:zinc ion binding"/>
    <property type="evidence" value="ECO:0007669"/>
    <property type="project" value="UniProtKB-KW"/>
</dbReference>
<dbReference type="GO" id="GO:0006357">
    <property type="term" value="P:regulation of transcription by RNA polymerase II"/>
    <property type="evidence" value="ECO:0000318"/>
    <property type="project" value="GO_Central"/>
</dbReference>
<dbReference type="CDD" id="cd07765">
    <property type="entry name" value="KRAB_A-box"/>
    <property type="match status" value="1"/>
</dbReference>
<dbReference type="FunFam" id="3.30.160.60:FF:000029">
    <property type="entry name" value="GLI family zinc finger 4"/>
    <property type="match status" value="1"/>
</dbReference>
<dbReference type="FunFam" id="3.30.160.60:FF:002716">
    <property type="entry name" value="Zinc finger protein 212"/>
    <property type="match status" value="1"/>
</dbReference>
<dbReference type="FunFam" id="3.30.160.60:FF:001158">
    <property type="entry name" value="zinc finger protein 22"/>
    <property type="match status" value="1"/>
</dbReference>
<dbReference type="FunFam" id="3.30.160.60:FF:001025">
    <property type="entry name" value="zinc finger protein 34"/>
    <property type="match status" value="1"/>
</dbReference>
<dbReference type="FunFam" id="3.30.160.60:FF:000519">
    <property type="entry name" value="Zinc finger protein 470"/>
    <property type="match status" value="1"/>
</dbReference>
<dbReference type="FunFam" id="3.30.160.60:FF:002090">
    <property type="entry name" value="Zinc finger protein 473"/>
    <property type="match status" value="1"/>
</dbReference>
<dbReference type="FunFam" id="3.30.160.60:FF:000281">
    <property type="entry name" value="Zinc finger protein 558 isoform X1"/>
    <property type="match status" value="1"/>
</dbReference>
<dbReference type="FunFam" id="3.30.160.60:FF:000098">
    <property type="entry name" value="Zinc finger protein 614"/>
    <property type="match status" value="3"/>
</dbReference>
<dbReference type="FunFam" id="3.30.160.60:FF:000710">
    <property type="entry name" value="Zinc finger protein 768"/>
    <property type="match status" value="1"/>
</dbReference>
<dbReference type="Gene3D" id="6.10.140.140">
    <property type="match status" value="1"/>
</dbReference>
<dbReference type="Gene3D" id="3.30.160.60">
    <property type="entry name" value="Classic Zinc Finger"/>
    <property type="match status" value="13"/>
</dbReference>
<dbReference type="InterPro" id="IPR050636">
    <property type="entry name" value="C2H2-ZF_domain-containing"/>
</dbReference>
<dbReference type="InterPro" id="IPR001909">
    <property type="entry name" value="KRAB"/>
</dbReference>
<dbReference type="InterPro" id="IPR036051">
    <property type="entry name" value="KRAB_dom_sf"/>
</dbReference>
<dbReference type="InterPro" id="IPR036236">
    <property type="entry name" value="Znf_C2H2_sf"/>
</dbReference>
<dbReference type="InterPro" id="IPR013087">
    <property type="entry name" value="Znf_C2H2_type"/>
</dbReference>
<dbReference type="PANTHER" id="PTHR47772">
    <property type="entry name" value="ZINC FINGER PROTEIN 200"/>
    <property type="match status" value="1"/>
</dbReference>
<dbReference type="PANTHER" id="PTHR47772:SF5">
    <property type="entry name" value="ZINC FINGER PROTEIN 551"/>
    <property type="match status" value="1"/>
</dbReference>
<dbReference type="Pfam" id="PF01352">
    <property type="entry name" value="KRAB"/>
    <property type="match status" value="1"/>
</dbReference>
<dbReference type="Pfam" id="PF00096">
    <property type="entry name" value="zf-C2H2"/>
    <property type="match status" value="11"/>
</dbReference>
<dbReference type="SMART" id="SM00349">
    <property type="entry name" value="KRAB"/>
    <property type="match status" value="1"/>
</dbReference>
<dbReference type="SMART" id="SM00355">
    <property type="entry name" value="ZnF_C2H2"/>
    <property type="match status" value="13"/>
</dbReference>
<dbReference type="SUPFAM" id="SSF57667">
    <property type="entry name" value="beta-beta-alpha zinc fingers"/>
    <property type="match status" value="7"/>
</dbReference>
<dbReference type="SUPFAM" id="SSF109640">
    <property type="entry name" value="KRAB domain (Kruppel-associated box)"/>
    <property type="match status" value="1"/>
</dbReference>
<dbReference type="PROSITE" id="PS50805">
    <property type="entry name" value="KRAB"/>
    <property type="match status" value="1"/>
</dbReference>
<dbReference type="PROSITE" id="PS00028">
    <property type="entry name" value="ZINC_FINGER_C2H2_1"/>
    <property type="match status" value="12"/>
</dbReference>
<dbReference type="PROSITE" id="PS50157">
    <property type="entry name" value="ZINC_FINGER_C2H2_2"/>
    <property type="match status" value="13"/>
</dbReference>
<organism>
    <name type="scientific">Homo sapiens</name>
    <name type="common">Human</name>
    <dbReference type="NCBI Taxonomy" id="9606"/>
    <lineage>
        <taxon>Eukaryota</taxon>
        <taxon>Metazoa</taxon>
        <taxon>Chordata</taxon>
        <taxon>Craniata</taxon>
        <taxon>Vertebrata</taxon>
        <taxon>Euteleostomi</taxon>
        <taxon>Mammalia</taxon>
        <taxon>Eutheria</taxon>
        <taxon>Euarchontoglires</taxon>
        <taxon>Primates</taxon>
        <taxon>Haplorrhini</taxon>
        <taxon>Catarrhini</taxon>
        <taxon>Hominidae</taxon>
        <taxon>Homo</taxon>
    </lineage>
</organism>
<protein>
    <recommendedName>
        <fullName>Zinc finger protein 792</fullName>
    </recommendedName>
</protein>
<reference key="1">
    <citation type="journal article" date="2004" name="Nat. Genet.">
        <title>Complete sequencing and characterization of 21,243 full-length human cDNAs.</title>
        <authorList>
            <person name="Ota T."/>
            <person name="Suzuki Y."/>
            <person name="Nishikawa T."/>
            <person name="Otsuki T."/>
            <person name="Sugiyama T."/>
            <person name="Irie R."/>
            <person name="Wakamatsu A."/>
            <person name="Hayashi K."/>
            <person name="Sato H."/>
            <person name="Nagai K."/>
            <person name="Kimura K."/>
            <person name="Makita H."/>
            <person name="Sekine M."/>
            <person name="Obayashi M."/>
            <person name="Nishi T."/>
            <person name="Shibahara T."/>
            <person name="Tanaka T."/>
            <person name="Ishii S."/>
            <person name="Yamamoto J."/>
            <person name="Saito K."/>
            <person name="Kawai Y."/>
            <person name="Isono Y."/>
            <person name="Nakamura Y."/>
            <person name="Nagahari K."/>
            <person name="Murakami K."/>
            <person name="Yasuda T."/>
            <person name="Iwayanagi T."/>
            <person name="Wagatsuma M."/>
            <person name="Shiratori A."/>
            <person name="Sudo H."/>
            <person name="Hosoiri T."/>
            <person name="Kaku Y."/>
            <person name="Kodaira H."/>
            <person name="Kondo H."/>
            <person name="Sugawara M."/>
            <person name="Takahashi M."/>
            <person name="Kanda K."/>
            <person name="Yokoi T."/>
            <person name="Furuya T."/>
            <person name="Kikkawa E."/>
            <person name="Omura Y."/>
            <person name="Abe K."/>
            <person name="Kamihara K."/>
            <person name="Katsuta N."/>
            <person name="Sato K."/>
            <person name="Tanikawa M."/>
            <person name="Yamazaki M."/>
            <person name="Ninomiya K."/>
            <person name="Ishibashi T."/>
            <person name="Yamashita H."/>
            <person name="Murakawa K."/>
            <person name="Fujimori K."/>
            <person name="Tanai H."/>
            <person name="Kimata M."/>
            <person name="Watanabe M."/>
            <person name="Hiraoka S."/>
            <person name="Chiba Y."/>
            <person name="Ishida S."/>
            <person name="Ono Y."/>
            <person name="Takiguchi S."/>
            <person name="Watanabe S."/>
            <person name="Yosida M."/>
            <person name="Hotuta T."/>
            <person name="Kusano J."/>
            <person name="Kanehori K."/>
            <person name="Takahashi-Fujii A."/>
            <person name="Hara H."/>
            <person name="Tanase T.-O."/>
            <person name="Nomura Y."/>
            <person name="Togiya S."/>
            <person name="Komai F."/>
            <person name="Hara R."/>
            <person name="Takeuchi K."/>
            <person name="Arita M."/>
            <person name="Imose N."/>
            <person name="Musashino K."/>
            <person name="Yuuki H."/>
            <person name="Oshima A."/>
            <person name="Sasaki N."/>
            <person name="Aotsuka S."/>
            <person name="Yoshikawa Y."/>
            <person name="Matsunawa H."/>
            <person name="Ichihara T."/>
            <person name="Shiohata N."/>
            <person name="Sano S."/>
            <person name="Moriya S."/>
            <person name="Momiyama H."/>
            <person name="Satoh N."/>
            <person name="Takami S."/>
            <person name="Terashima Y."/>
            <person name="Suzuki O."/>
            <person name="Nakagawa S."/>
            <person name="Senoh A."/>
            <person name="Mizoguchi H."/>
            <person name="Goto Y."/>
            <person name="Shimizu F."/>
            <person name="Wakebe H."/>
            <person name="Hishigaki H."/>
            <person name="Watanabe T."/>
            <person name="Sugiyama A."/>
            <person name="Takemoto M."/>
            <person name="Kawakami B."/>
            <person name="Yamazaki M."/>
            <person name="Watanabe K."/>
            <person name="Kumagai A."/>
            <person name="Itakura S."/>
            <person name="Fukuzumi Y."/>
            <person name="Fujimori Y."/>
            <person name="Komiyama M."/>
            <person name="Tashiro H."/>
            <person name="Tanigami A."/>
            <person name="Fujiwara T."/>
            <person name="Ono T."/>
            <person name="Yamada K."/>
            <person name="Fujii Y."/>
            <person name="Ozaki K."/>
            <person name="Hirao M."/>
            <person name="Ohmori Y."/>
            <person name="Kawabata A."/>
            <person name="Hikiji T."/>
            <person name="Kobatake N."/>
            <person name="Inagaki H."/>
            <person name="Ikema Y."/>
            <person name="Okamoto S."/>
            <person name="Okitani R."/>
            <person name="Kawakami T."/>
            <person name="Noguchi S."/>
            <person name="Itoh T."/>
            <person name="Shigeta K."/>
            <person name="Senba T."/>
            <person name="Matsumura K."/>
            <person name="Nakajima Y."/>
            <person name="Mizuno T."/>
            <person name="Morinaga M."/>
            <person name="Sasaki M."/>
            <person name="Togashi T."/>
            <person name="Oyama M."/>
            <person name="Hata H."/>
            <person name="Watanabe M."/>
            <person name="Komatsu T."/>
            <person name="Mizushima-Sugano J."/>
            <person name="Satoh T."/>
            <person name="Shirai Y."/>
            <person name="Takahashi Y."/>
            <person name="Nakagawa K."/>
            <person name="Okumura K."/>
            <person name="Nagase T."/>
            <person name="Nomura N."/>
            <person name="Kikuchi H."/>
            <person name="Masuho Y."/>
            <person name="Yamashita R."/>
            <person name="Nakai K."/>
            <person name="Yada T."/>
            <person name="Nakamura Y."/>
            <person name="Ohara O."/>
            <person name="Isogai T."/>
            <person name="Sugano S."/>
        </authorList>
    </citation>
    <scope>NUCLEOTIDE SEQUENCE [LARGE SCALE MRNA]</scope>
    <source>
        <tissue>Brain</tissue>
    </source>
</reference>
<reference key="2">
    <citation type="journal article" date="2004" name="Nature">
        <title>The DNA sequence and biology of human chromosome 19.</title>
        <authorList>
            <person name="Grimwood J."/>
            <person name="Gordon L.A."/>
            <person name="Olsen A.S."/>
            <person name="Terry A."/>
            <person name="Schmutz J."/>
            <person name="Lamerdin J.E."/>
            <person name="Hellsten U."/>
            <person name="Goodstein D."/>
            <person name="Couronne O."/>
            <person name="Tran-Gyamfi M."/>
            <person name="Aerts A."/>
            <person name="Altherr M."/>
            <person name="Ashworth L."/>
            <person name="Bajorek E."/>
            <person name="Black S."/>
            <person name="Branscomb E."/>
            <person name="Caenepeel S."/>
            <person name="Carrano A.V."/>
            <person name="Caoile C."/>
            <person name="Chan Y.M."/>
            <person name="Christensen M."/>
            <person name="Cleland C.A."/>
            <person name="Copeland A."/>
            <person name="Dalin E."/>
            <person name="Dehal P."/>
            <person name="Denys M."/>
            <person name="Detter J.C."/>
            <person name="Escobar J."/>
            <person name="Flowers D."/>
            <person name="Fotopulos D."/>
            <person name="Garcia C."/>
            <person name="Georgescu A.M."/>
            <person name="Glavina T."/>
            <person name="Gomez M."/>
            <person name="Gonzales E."/>
            <person name="Groza M."/>
            <person name="Hammon N."/>
            <person name="Hawkins T."/>
            <person name="Haydu L."/>
            <person name="Ho I."/>
            <person name="Huang W."/>
            <person name="Israni S."/>
            <person name="Jett J."/>
            <person name="Kadner K."/>
            <person name="Kimball H."/>
            <person name="Kobayashi A."/>
            <person name="Larionov V."/>
            <person name="Leem S.-H."/>
            <person name="Lopez F."/>
            <person name="Lou Y."/>
            <person name="Lowry S."/>
            <person name="Malfatti S."/>
            <person name="Martinez D."/>
            <person name="McCready P.M."/>
            <person name="Medina C."/>
            <person name="Morgan J."/>
            <person name="Nelson K."/>
            <person name="Nolan M."/>
            <person name="Ovcharenko I."/>
            <person name="Pitluck S."/>
            <person name="Pollard M."/>
            <person name="Popkie A.P."/>
            <person name="Predki P."/>
            <person name="Quan G."/>
            <person name="Ramirez L."/>
            <person name="Rash S."/>
            <person name="Retterer J."/>
            <person name="Rodriguez A."/>
            <person name="Rogers S."/>
            <person name="Salamov A."/>
            <person name="Salazar A."/>
            <person name="She X."/>
            <person name="Smith D."/>
            <person name="Slezak T."/>
            <person name="Solovyev V."/>
            <person name="Thayer N."/>
            <person name="Tice H."/>
            <person name="Tsai M."/>
            <person name="Ustaszewska A."/>
            <person name="Vo N."/>
            <person name="Wagner M."/>
            <person name="Wheeler J."/>
            <person name="Wu K."/>
            <person name="Xie G."/>
            <person name="Yang J."/>
            <person name="Dubchak I."/>
            <person name="Furey T.S."/>
            <person name="DeJong P."/>
            <person name="Dickson M."/>
            <person name="Gordon D."/>
            <person name="Eichler E.E."/>
            <person name="Pennacchio L.A."/>
            <person name="Richardson P."/>
            <person name="Stubbs L."/>
            <person name="Rokhsar D.S."/>
            <person name="Myers R.M."/>
            <person name="Rubin E.M."/>
            <person name="Lucas S.M."/>
        </authorList>
    </citation>
    <scope>NUCLEOTIDE SEQUENCE [LARGE SCALE GENOMIC DNA]</scope>
</reference>
<reference key="3">
    <citation type="journal article" date="2004" name="Genome Res.">
        <title>The status, quality, and expansion of the NIH full-length cDNA project: the Mammalian Gene Collection (MGC).</title>
        <authorList>
            <consortium name="The MGC Project Team"/>
        </authorList>
    </citation>
    <scope>NUCLEOTIDE SEQUENCE [LARGE SCALE MRNA] OF 74-632</scope>
    <scope>VARIANT GLN-177</scope>
</reference>
<reference key="4">
    <citation type="journal article" date="2013" name="J. Proteome Res.">
        <title>Toward a comprehensive characterization of a human cancer cell phosphoproteome.</title>
        <authorList>
            <person name="Zhou H."/>
            <person name="Di Palma S."/>
            <person name="Preisinger C."/>
            <person name="Peng M."/>
            <person name="Polat A.N."/>
            <person name="Heck A.J."/>
            <person name="Mohammed S."/>
        </authorList>
    </citation>
    <scope>PHOSPHORYLATION [LARGE SCALE ANALYSIS] AT SER-196</scope>
    <scope>IDENTIFICATION BY MASS SPECTROMETRY [LARGE SCALE ANALYSIS]</scope>
    <source>
        <tissue>Erythroleukemia</tissue>
    </source>
</reference>
<comment type="function">
    <text>May be involved in transcriptional regulation.</text>
</comment>
<comment type="interaction">
    <interactant intactId="EBI-10240849">
        <id>Q3KQV3</id>
    </interactant>
    <interactant intactId="EBI-745213">
        <id>P29972</id>
        <label>AQP1</label>
    </interactant>
    <organismsDiffer>false</organismsDiffer>
    <experiments>3</experiments>
</comment>
<comment type="interaction">
    <interactant intactId="EBI-10240849">
        <id>Q3KQV3</id>
    </interactant>
    <interactant intactId="EBI-1642333">
        <id>Q9BYV9</id>
        <label>BACH2</label>
    </interactant>
    <organismsDiffer>false</organismsDiffer>
    <experiments>3</experiments>
</comment>
<comment type="interaction">
    <interactant intactId="EBI-10240849">
        <id>Q3KQV3</id>
    </interactant>
    <interactant intactId="EBI-11977221">
        <id>Q86Z20</id>
        <label>CCDC125</label>
    </interactant>
    <organismsDiffer>false</organismsDiffer>
    <experiments>3</experiments>
</comment>
<comment type="interaction">
    <interactant intactId="EBI-10240849">
        <id>Q3KQV3</id>
    </interactant>
    <interactant intactId="EBI-395261">
        <id>P24863</id>
        <label>CCNC</label>
    </interactant>
    <organismsDiffer>false</organismsDiffer>
    <experiments>3</experiments>
</comment>
<comment type="interaction">
    <interactant intactId="EBI-10240849">
        <id>Q3KQV3</id>
    </interactant>
    <interactant intactId="EBI-739789">
        <id>Q92997</id>
        <label>DVL3</label>
    </interactant>
    <organismsDiffer>false</organismsDiffer>
    <experiments>3</experiments>
</comment>
<comment type="interaction">
    <interactant intactId="EBI-10240849">
        <id>Q3KQV3</id>
    </interactant>
    <interactant intactId="EBI-742350">
        <id>Q14241</id>
        <label>ELOA</label>
    </interactant>
    <organismsDiffer>false</organismsDiffer>
    <experiments>3</experiments>
</comment>
<comment type="interaction">
    <interactant intactId="EBI-10240849">
        <id>Q3KQV3</id>
    </interactant>
    <interactant intactId="EBI-371876">
        <id>Q9NQT4</id>
        <label>EXOSC5</label>
    </interactant>
    <organismsDiffer>false</organismsDiffer>
    <experiments>3</experiments>
</comment>
<comment type="interaction">
    <interactant intactId="EBI-10240849">
        <id>Q3KQV3</id>
    </interactant>
    <interactant intactId="EBI-719941">
        <id>Q3B820</id>
        <label>FAM161A</label>
    </interactant>
    <organismsDiffer>false</organismsDiffer>
    <experiments>3</experiments>
</comment>
<comment type="interaction">
    <interactant intactId="EBI-10240849">
        <id>Q3KQV3</id>
    </interactant>
    <interactant intactId="EBI-358318">
        <id>P22087</id>
        <label>FBL</label>
    </interactant>
    <organismsDiffer>false</organismsDiffer>
    <experiments>3</experiments>
</comment>
<comment type="interaction">
    <interactant intactId="EBI-10240849">
        <id>Q3KQV3</id>
    </interactant>
    <interactant intactId="EBI-750641">
        <id>Q5TD97</id>
        <label>FHL5</label>
    </interactant>
    <organismsDiffer>false</organismsDiffer>
    <experiments>3</experiments>
</comment>
<comment type="interaction">
    <interactant intactId="EBI-10240849">
        <id>Q3KQV3</id>
    </interactant>
    <interactant intactId="EBI-1052570">
        <id>O95995</id>
        <label>GAS8</label>
    </interactant>
    <organismsDiffer>false</organismsDiffer>
    <experiments>3</experiments>
</comment>
<comment type="interaction">
    <interactant intactId="EBI-10240849">
        <id>Q3KQV3</id>
    </interactant>
    <interactant intactId="EBI-5916454">
        <id>A6NEM1</id>
        <label>GOLGA6L9</label>
    </interactant>
    <organismsDiffer>false</organismsDiffer>
    <experiments>3</experiments>
</comment>
<comment type="interaction">
    <interactant intactId="EBI-10240849">
        <id>Q3KQV3</id>
    </interactant>
    <interactant intactId="EBI-304185">
        <id>P61978</id>
        <label>HNRNPK</label>
    </interactant>
    <organismsDiffer>false</organismsDiffer>
    <experiments>3</experiments>
</comment>
<comment type="interaction">
    <interactant intactId="EBI-10240849">
        <id>Q3KQV3</id>
    </interactant>
    <interactant intactId="EBI-358358">
        <id>Q96CX2</id>
        <label>KCTD12</label>
    </interactant>
    <organismsDiffer>false</organismsDiffer>
    <experiments>3</experiments>
</comment>
<comment type="interaction">
    <interactant intactId="EBI-10240849">
        <id>Q3KQV3</id>
    </interactant>
    <interactant intactId="EBI-10171697">
        <id>Q6A162</id>
        <label>KRT40</label>
    </interactant>
    <organismsDiffer>false</organismsDiffer>
    <experiments>3</experiments>
</comment>
<comment type="interaction">
    <interactant intactId="EBI-10240849">
        <id>Q3KQV3</id>
    </interactant>
    <interactant intactId="EBI-10172150">
        <id>P60370</id>
        <label>KRTAP10-5</label>
    </interactant>
    <organismsDiffer>false</organismsDiffer>
    <experiments>3</experiments>
</comment>
<comment type="interaction">
    <interactant intactId="EBI-10240849">
        <id>Q3KQV3</id>
    </interactant>
    <interactant intactId="EBI-12012928">
        <id>P60371</id>
        <label>KRTAP10-6</label>
    </interactant>
    <organismsDiffer>false</organismsDiffer>
    <experiments>3</experiments>
</comment>
<comment type="interaction">
    <interactant intactId="EBI-10240849">
        <id>Q3KQV3</id>
    </interactant>
    <interactant intactId="EBI-10172290">
        <id>P60409</id>
        <label>KRTAP10-7</label>
    </interactant>
    <organismsDiffer>false</organismsDiffer>
    <experiments>3</experiments>
</comment>
<comment type="interaction">
    <interactant intactId="EBI-10240849">
        <id>Q3KQV3</id>
    </interactant>
    <interactant intactId="EBI-10171774">
        <id>P60410</id>
        <label>KRTAP10-8</label>
    </interactant>
    <organismsDiffer>false</organismsDiffer>
    <experiments>3</experiments>
</comment>
<comment type="interaction">
    <interactant intactId="EBI-10240849">
        <id>Q3KQV3</id>
    </interactant>
    <interactant intactId="EBI-10172052">
        <id>P60411</id>
        <label>KRTAP10-9</label>
    </interactant>
    <organismsDiffer>false</organismsDiffer>
    <experiments>6</experiments>
</comment>
<comment type="interaction">
    <interactant intactId="EBI-10240849">
        <id>Q3KQV3</id>
    </interactant>
    <interactant intactId="EBI-14065470">
        <id>Q9BYR9</id>
        <label>KRTAP2-4</label>
    </interactant>
    <organismsDiffer>false</organismsDiffer>
    <experiments>3</experiments>
</comment>
<comment type="interaction">
    <interactant intactId="EBI-10240849">
        <id>Q3KQV3</id>
    </interactant>
    <interactant intactId="EBI-307531">
        <id>P23508</id>
        <label>MCC</label>
    </interactant>
    <organismsDiffer>false</organismsDiffer>
    <experiments>3</experiments>
</comment>
<comment type="interaction">
    <interactant intactId="EBI-10240849">
        <id>Q3KQV3</id>
    </interactant>
    <interactant intactId="EBI-10172526">
        <id>Q9UJV3-2</id>
        <label>MID2</label>
    </interactant>
    <organismsDiffer>false</organismsDiffer>
    <experiments>6</experiments>
</comment>
<comment type="interaction">
    <interactant intactId="EBI-10240849">
        <id>Q3KQV3</id>
    </interactant>
    <interactant intactId="EBI-11522433">
        <id>Q5JR59-3</id>
        <label>MTUS2</label>
    </interactant>
    <organismsDiffer>false</organismsDiffer>
    <experiments>3</experiments>
</comment>
<comment type="interaction">
    <interactant intactId="EBI-10240849">
        <id>Q3KQV3</id>
    </interactant>
    <interactant intactId="EBI-1567797">
        <id>Q8WWY3</id>
        <label>PRPF31</label>
    </interactant>
    <organismsDiffer>false</organismsDiffer>
    <experiments>3</experiments>
</comment>
<comment type="interaction">
    <interactant intactId="EBI-10240849">
        <id>Q3KQV3</id>
    </interactant>
    <interactant intactId="EBI-8642021">
        <id>Q15415</id>
        <label>RBMY1J</label>
    </interactant>
    <organismsDiffer>false</organismsDiffer>
    <experiments>3</experiments>
</comment>
<comment type="interaction">
    <interactant intactId="EBI-10240849">
        <id>Q3KQV3</id>
    </interactant>
    <interactant intactId="EBI-2340927">
        <id>P78317</id>
        <label>RNF4</label>
    </interactant>
    <organismsDiffer>false</organismsDiffer>
    <experiments>3</experiments>
</comment>
<comment type="interaction">
    <interactant intactId="EBI-10240849">
        <id>Q3KQV3</id>
    </interactant>
    <interactant intactId="EBI-2212028">
        <id>Q9Y2D8</id>
        <label>SSX2IP</label>
    </interactant>
    <organismsDiffer>false</organismsDiffer>
    <experiments>3</experiments>
</comment>
<comment type="interaction">
    <interactant intactId="EBI-10240849">
        <id>Q3KQV3</id>
    </interactant>
    <interactant intactId="EBI-11741437">
        <id>Q08117-2</id>
        <label>TLE5</label>
    </interactant>
    <organismsDiffer>false</organismsDiffer>
    <experiments>3</experiments>
</comment>
<comment type="interaction">
    <interactant intactId="EBI-10240849">
        <id>Q3KQV3</id>
    </interactant>
    <interactant intactId="EBI-725997">
        <id>Q8WV44</id>
        <label>TRIM41</label>
    </interactant>
    <organismsDiffer>false</organismsDiffer>
    <experiments>3</experiments>
</comment>
<comment type="interaction">
    <interactant intactId="EBI-10240849">
        <id>Q3KQV3</id>
    </interactant>
    <interactant intactId="EBI-7877438">
        <id>P42681</id>
        <label>TXK</label>
    </interactant>
    <organismsDiffer>false</organismsDiffer>
    <experiments>3</experiments>
</comment>
<comment type="interaction">
    <interactant intactId="EBI-10240849">
        <id>Q3KQV3</id>
    </interactant>
    <interactant intactId="EBI-744471">
        <id>O43167</id>
        <label>ZBTB24</label>
    </interactant>
    <organismsDiffer>false</organismsDiffer>
    <experiments>3</experiments>
</comment>
<comment type="interaction">
    <interactant intactId="EBI-10240849">
        <id>Q3KQV3</id>
    </interactant>
    <interactant intactId="EBI-10177272">
        <id>P15622-3</id>
        <label>ZNF250</label>
    </interactant>
    <organismsDiffer>false</organismsDiffer>
    <experiments>3</experiments>
</comment>
<comment type="interaction">
    <interactant intactId="EBI-10240849">
        <id>Q3KQV3</id>
    </interactant>
    <interactant intactId="EBI-17263125">
        <id>Q9NSD4</id>
        <label>ZNF275</label>
    </interactant>
    <organismsDiffer>false</organismsDiffer>
    <experiments>3</experiments>
</comment>
<comment type="interaction">
    <interactant intactId="EBI-10240849">
        <id>Q3KQV3</id>
    </interactant>
    <interactant intactId="EBI-10754950">
        <id>Q9HBT8</id>
        <label>ZNF286A</label>
    </interactant>
    <organismsDiffer>false</organismsDiffer>
    <experiments>3</experiments>
</comment>
<comment type="interaction">
    <interactant intactId="EBI-10240849">
        <id>Q3KQV3</id>
    </interactant>
    <interactant intactId="EBI-347633">
        <id>Q9H9D4</id>
        <label>ZNF408</label>
    </interactant>
    <organismsDiffer>false</organismsDiffer>
    <experiments>6</experiments>
</comment>
<comment type="interaction">
    <interactant intactId="EBI-10240849">
        <id>Q3KQV3</id>
    </interactant>
    <interactant intactId="EBI-751409">
        <id>Q8WTR7</id>
        <label>ZNF473</label>
    </interactant>
    <organismsDiffer>false</organismsDiffer>
    <experiments>5</experiments>
</comment>
<comment type="interaction">
    <interactant intactId="EBI-10240849">
        <id>Q3KQV3</id>
    </interactant>
    <interactant intactId="EBI-12006434">
        <id>Q96MX3</id>
        <label>ZNF48</label>
    </interactant>
    <organismsDiffer>false</organismsDiffer>
    <experiments>3</experiments>
</comment>
<comment type="interaction">
    <interactant intactId="EBI-10240849">
        <id>Q3KQV3</id>
    </interactant>
    <interactant intactId="EBI-10486136">
        <id>Q6ZNH5</id>
        <label>ZNF497</label>
    </interactant>
    <organismsDiffer>false</organismsDiffer>
    <experiments>3</experiments>
</comment>
<comment type="interaction">
    <interactant intactId="EBI-10240849">
        <id>Q3KQV3</id>
    </interactant>
    <interactant intactId="EBI-11035148">
        <id>Q8TF50</id>
        <label>ZNF526</label>
    </interactant>
    <organismsDiffer>false</organismsDiffer>
    <experiments>3</experiments>
</comment>
<comment type="interaction">
    <interactant intactId="EBI-10240849">
        <id>Q3KQV3</id>
    </interactant>
    <interactant intactId="EBI-2555731">
        <id>Q9H707</id>
        <label>ZNF552</label>
    </interactant>
    <organismsDiffer>false</organismsDiffer>
    <experiments>3</experiments>
</comment>
<comment type="interaction">
    <interactant intactId="EBI-10240849">
        <id>Q3KQV3</id>
    </interactant>
    <interactant intactId="EBI-745520">
        <id>Q9P0T4</id>
        <label>ZNF581</label>
    </interactant>
    <organismsDiffer>false</organismsDiffer>
    <experiments>3</experiments>
</comment>
<comment type="interaction">
    <interactant intactId="EBI-10240849">
        <id>Q3KQV3</id>
    </interactant>
    <interactant intactId="EBI-947476">
        <id>Q9UID6</id>
        <label>ZNF639</label>
    </interactant>
    <organismsDiffer>false</organismsDiffer>
    <experiments>3</experiments>
</comment>
<comment type="interaction">
    <interactant intactId="EBI-10240849">
        <id>Q3KQV3</id>
    </interactant>
    <interactant intactId="EBI-11985915">
        <id>Q5T619</id>
        <label>ZNF648</label>
    </interactant>
    <organismsDiffer>false</organismsDiffer>
    <experiments>3</experiments>
</comment>
<comment type="interaction">
    <interactant intactId="EBI-10240849">
        <id>Q3KQV3</id>
    </interactant>
    <interactant intactId="EBI-625509">
        <id>Q8N720</id>
        <label>ZNF655</label>
    </interactant>
    <organismsDiffer>false</organismsDiffer>
    <experiments>3</experiments>
</comment>
<comment type="interaction">
    <interactant intactId="EBI-10240849">
        <id>Q3KQV3</id>
    </interactant>
    <interactant intactId="EBI-12817597">
        <id>Q96K58-2</id>
        <label>ZNF668</label>
    </interactant>
    <organismsDiffer>false</organismsDiffer>
    <experiments>3</experiments>
</comment>
<comment type="interaction">
    <interactant intactId="EBI-10240849">
        <id>Q3KQV3</id>
    </interactant>
    <interactant intactId="EBI-7138235">
        <id>Q9NQZ8</id>
        <label>ZNF71</label>
    </interactant>
    <organismsDiffer>false</organismsDiffer>
    <experiments>3</experiments>
</comment>
<comment type="interaction">
    <interactant intactId="EBI-10240849">
        <id>Q3KQV3</id>
    </interactant>
    <interactant intactId="EBI-10240849">
        <id>Q3KQV3</id>
        <label>ZNF792</label>
    </interactant>
    <organismsDiffer>false</organismsDiffer>
    <experiments>8</experiments>
</comment>
<comment type="interaction">
    <interactant intactId="EBI-10240849">
        <id>Q3KQV3</id>
    </interactant>
    <interactant intactId="EBI-5667516">
        <id>Q9Y2P0</id>
        <label>ZNF835</label>
    </interactant>
    <organismsDiffer>false</organismsDiffer>
    <experiments>3</experiments>
</comment>
<comment type="interaction">
    <interactant intactId="EBI-10240849">
        <id>Q3KQV3</id>
    </interactant>
    <interactant intactId="EBI-11962574">
        <id>Q96EG3</id>
        <label>ZNF837</label>
    </interactant>
    <organismsDiffer>false</organismsDiffer>
    <experiments>3</experiments>
</comment>
<comment type="interaction">
    <interactant intactId="EBI-10240849">
        <id>Q3KQV3</id>
    </interactant>
    <interactant intactId="EBI-527853">
        <id>Q9UGI0</id>
        <label>ZRANB1</label>
    </interactant>
    <organismsDiffer>false</organismsDiffer>
    <experiments>3</experiments>
</comment>
<comment type="subcellular location">
    <subcellularLocation>
        <location evidence="4">Nucleus</location>
    </subcellularLocation>
</comment>
<comment type="similarity">
    <text evidence="4">Belongs to the krueppel C2H2-type zinc-finger protein family.</text>
</comment>
<comment type="sequence caution" evidence="4">
    <conflict type="erroneous initiation">
        <sequence resource="EMBL-CDS" id="AAI01119"/>
    </conflict>
    <text>Truncated N-terminus.</text>
</comment>
<comment type="sequence caution" evidence="4">
    <conflict type="erroneous initiation">
        <sequence resource="EMBL-CDS" id="AAI01120"/>
    </conflict>
    <text>Truncated N-terminus.</text>
</comment>
<comment type="sequence caution" evidence="4">
    <conflict type="erroneous initiation">
        <sequence resource="EMBL-CDS" id="AAI01121"/>
    </conflict>
    <text>Truncated N-terminus.</text>
</comment>
<proteinExistence type="evidence at protein level"/>
<sequence length="632" mass="71577">MAAAALRDPAQGCVTFEDVTIYFSQEEWVLLDEAQRLLYCDVMLENFALIASLGLISFRSHIVSQLEMGKEPWVPDSVDMTSAMARGAYGRPGSDFCHGTEGKDLPSEHNVSVEGVAQDRSPEATLCPQKTCPCDICGLRLKDILHLAEHQTTHPRQKPFVCEAYVKGSEFSANLPRKQVQQNVHNPIRTEEGQASPVKTCRDHTSDQLSTCREGGKDFVATAGFLQCEVTPSDGEPHEATEGVVDFHIALRHNKCCESGDAFNNKSTLVQHQRIHSRERPYECSKCGIFFTYAADLTQHQKVHNRGKPYECCECGKFFSQHSSLVKHRRVHTGESPHVCGDCGKFFSRSSNLIQHKRVHTGEKPYECSDCGKFFSQRSNLIHHKRVHTGRSAHECSECGKSFNCNSSLIKHWRVHTGERPYKCNECGKFFSHIASLIQHQIVHTGERPHGCGECGKAFSRSSDLMKHQRVHTGERPYECNECGKLFSQSSSLNSHRRLHTGERPYQCSECGKFFNQSSSLNNHRRLHTGERPYECSECGKTFRQRSNLRQHLKVHKPDRPYECSECGKAFNQRPTLIRHQKIHIRERSMENVLLPCSQHTPEISSENRPYQGAVNYKLKLVHPSTHPGEVP</sequence>
<feature type="chain" id="PRO_0000293698" description="Zinc finger protein 792">
    <location>
        <begin position="1"/>
        <end position="632"/>
    </location>
</feature>
<feature type="domain" description="KRAB" evidence="2">
    <location>
        <begin position="14"/>
        <end position="85"/>
    </location>
</feature>
<feature type="zinc finger region" description="C2H2-type 1" evidence="1">
    <location>
        <begin position="132"/>
        <end position="154"/>
    </location>
</feature>
<feature type="zinc finger region" description="C2H2-type 2; degenerate" evidence="1">
    <location>
        <begin position="254"/>
        <end position="276"/>
    </location>
</feature>
<feature type="zinc finger region" description="C2H2-type 3" evidence="1">
    <location>
        <begin position="282"/>
        <end position="304"/>
    </location>
</feature>
<feature type="zinc finger region" description="C2H2-type 4" evidence="1">
    <location>
        <begin position="310"/>
        <end position="332"/>
    </location>
</feature>
<feature type="zinc finger region" description="C2H2-type 5" evidence="1">
    <location>
        <begin position="338"/>
        <end position="360"/>
    </location>
</feature>
<feature type="zinc finger region" description="C2H2-type 6" evidence="1">
    <location>
        <begin position="366"/>
        <end position="388"/>
    </location>
</feature>
<feature type="zinc finger region" description="C2H2-type 7" evidence="1">
    <location>
        <begin position="394"/>
        <end position="416"/>
    </location>
</feature>
<feature type="zinc finger region" description="C2H2-type 8" evidence="1">
    <location>
        <begin position="422"/>
        <end position="444"/>
    </location>
</feature>
<feature type="zinc finger region" description="C2H2-type 9" evidence="1">
    <location>
        <begin position="450"/>
        <end position="472"/>
    </location>
</feature>
<feature type="zinc finger region" description="C2H2-type 10" evidence="1">
    <location>
        <begin position="478"/>
        <end position="500"/>
    </location>
</feature>
<feature type="zinc finger region" description="C2H2-type 11" evidence="1">
    <location>
        <begin position="506"/>
        <end position="528"/>
    </location>
</feature>
<feature type="zinc finger region" description="C2H2-type 12" evidence="1">
    <location>
        <begin position="534"/>
        <end position="556"/>
    </location>
</feature>
<feature type="zinc finger region" description="C2H2-type 13" evidence="1">
    <location>
        <begin position="562"/>
        <end position="584"/>
    </location>
</feature>
<feature type="modified residue" description="Phosphoserine" evidence="5">
    <location>
        <position position="196"/>
    </location>
</feature>
<feature type="sequence variant" id="VAR_033106" description="In dbSNP:rs2651079." evidence="3">
    <original>R</original>
    <variation>Q</variation>
    <location>
        <position position="177"/>
    </location>
</feature>
<feature type="sequence variant" id="VAR_047354" description="In dbSNP:rs3746244.">
    <original>R</original>
    <variation>W</variation>
    <location>
        <position position="525"/>
    </location>
</feature>
<feature type="sequence conflict" description="In Ref. 1; BAG65345." evidence="4" ref="1">
    <original>M</original>
    <variation>T</variation>
    <location>
        <position position="590"/>
    </location>
</feature>
<gene>
    <name type="primary">ZNF792</name>
</gene>